<comment type="catalytic activity">
    <reaction evidence="1">
        <text>L-citrulline + L-aspartate + ATP = 2-(N(omega)-L-arginino)succinate + AMP + diphosphate + H(+)</text>
        <dbReference type="Rhea" id="RHEA:10932"/>
        <dbReference type="ChEBI" id="CHEBI:15378"/>
        <dbReference type="ChEBI" id="CHEBI:29991"/>
        <dbReference type="ChEBI" id="CHEBI:30616"/>
        <dbReference type="ChEBI" id="CHEBI:33019"/>
        <dbReference type="ChEBI" id="CHEBI:57472"/>
        <dbReference type="ChEBI" id="CHEBI:57743"/>
        <dbReference type="ChEBI" id="CHEBI:456215"/>
        <dbReference type="EC" id="6.3.4.5"/>
    </reaction>
</comment>
<comment type="pathway">
    <text evidence="1">Amino-acid biosynthesis; L-arginine biosynthesis; L-arginine from L-ornithine and carbamoyl phosphate: step 2/3.</text>
</comment>
<comment type="subunit">
    <text evidence="1">Homotetramer.</text>
</comment>
<comment type="subcellular location">
    <subcellularLocation>
        <location evidence="1">Cytoplasm</location>
    </subcellularLocation>
</comment>
<comment type="similarity">
    <text evidence="1">Belongs to the argininosuccinate synthase family. Type 1 subfamily.</text>
</comment>
<gene>
    <name evidence="1" type="primary">argG</name>
    <name type="ordered locus">R03209</name>
    <name type="ORF">SMc03826</name>
</gene>
<proteinExistence type="inferred from homology"/>
<organism>
    <name type="scientific">Rhizobium meliloti (strain 1021)</name>
    <name type="common">Ensifer meliloti</name>
    <name type="synonym">Sinorhizobium meliloti</name>
    <dbReference type="NCBI Taxonomy" id="266834"/>
    <lineage>
        <taxon>Bacteria</taxon>
        <taxon>Pseudomonadati</taxon>
        <taxon>Pseudomonadota</taxon>
        <taxon>Alphaproteobacteria</taxon>
        <taxon>Hyphomicrobiales</taxon>
        <taxon>Rhizobiaceae</taxon>
        <taxon>Sinorhizobium/Ensifer group</taxon>
        <taxon>Sinorhizobium</taxon>
    </lineage>
</organism>
<name>ASSY_RHIME</name>
<evidence type="ECO:0000255" key="1">
    <source>
        <dbReference type="HAMAP-Rule" id="MF_00005"/>
    </source>
</evidence>
<dbReference type="EC" id="6.3.4.5" evidence="1"/>
<dbReference type="EMBL" id="AL591688">
    <property type="protein sequence ID" value="CAC47788.1"/>
    <property type="molecule type" value="Genomic_DNA"/>
</dbReference>
<dbReference type="RefSeq" id="NP_387315.1">
    <property type="nucleotide sequence ID" value="NC_003047.1"/>
</dbReference>
<dbReference type="RefSeq" id="WP_003529681.1">
    <property type="nucleotide sequence ID" value="NC_003047.1"/>
</dbReference>
<dbReference type="SMR" id="Q92L73"/>
<dbReference type="EnsemblBacteria" id="CAC47788">
    <property type="protein sequence ID" value="CAC47788"/>
    <property type="gene ID" value="SMc03826"/>
</dbReference>
<dbReference type="KEGG" id="sme:SMc03826"/>
<dbReference type="PATRIC" id="fig|266834.11.peg.4761"/>
<dbReference type="eggNOG" id="COG0137">
    <property type="taxonomic scope" value="Bacteria"/>
</dbReference>
<dbReference type="HOGENOM" id="CLU_032784_4_2_5"/>
<dbReference type="OrthoDB" id="9801641at2"/>
<dbReference type="UniPathway" id="UPA00068">
    <property type="reaction ID" value="UER00113"/>
</dbReference>
<dbReference type="Proteomes" id="UP000001976">
    <property type="component" value="Chromosome"/>
</dbReference>
<dbReference type="GO" id="GO:0005737">
    <property type="term" value="C:cytoplasm"/>
    <property type="evidence" value="ECO:0007669"/>
    <property type="project" value="UniProtKB-SubCell"/>
</dbReference>
<dbReference type="GO" id="GO:0004055">
    <property type="term" value="F:argininosuccinate synthase activity"/>
    <property type="evidence" value="ECO:0007669"/>
    <property type="project" value="UniProtKB-UniRule"/>
</dbReference>
<dbReference type="GO" id="GO:0005524">
    <property type="term" value="F:ATP binding"/>
    <property type="evidence" value="ECO:0007669"/>
    <property type="project" value="UniProtKB-UniRule"/>
</dbReference>
<dbReference type="GO" id="GO:0000053">
    <property type="term" value="P:argininosuccinate metabolic process"/>
    <property type="evidence" value="ECO:0007669"/>
    <property type="project" value="TreeGrafter"/>
</dbReference>
<dbReference type="GO" id="GO:0006526">
    <property type="term" value="P:L-arginine biosynthetic process"/>
    <property type="evidence" value="ECO:0007669"/>
    <property type="project" value="UniProtKB-UniRule"/>
</dbReference>
<dbReference type="GO" id="GO:0000050">
    <property type="term" value="P:urea cycle"/>
    <property type="evidence" value="ECO:0007669"/>
    <property type="project" value="TreeGrafter"/>
</dbReference>
<dbReference type="CDD" id="cd01999">
    <property type="entry name" value="ASS"/>
    <property type="match status" value="1"/>
</dbReference>
<dbReference type="FunFam" id="3.40.50.620:FF:000019">
    <property type="entry name" value="Argininosuccinate synthase"/>
    <property type="match status" value="1"/>
</dbReference>
<dbReference type="FunFam" id="3.90.1260.10:FF:000007">
    <property type="entry name" value="Argininosuccinate synthase"/>
    <property type="match status" value="1"/>
</dbReference>
<dbReference type="Gene3D" id="3.90.1260.10">
    <property type="entry name" value="Argininosuccinate synthetase, chain A, domain 2"/>
    <property type="match status" value="1"/>
</dbReference>
<dbReference type="Gene3D" id="3.40.50.620">
    <property type="entry name" value="HUPs"/>
    <property type="match status" value="1"/>
</dbReference>
<dbReference type="Gene3D" id="1.20.5.470">
    <property type="entry name" value="Single helix bin"/>
    <property type="match status" value="1"/>
</dbReference>
<dbReference type="HAMAP" id="MF_00005">
    <property type="entry name" value="Arg_succ_synth_type1"/>
    <property type="match status" value="1"/>
</dbReference>
<dbReference type="InterPro" id="IPR048268">
    <property type="entry name" value="Arginosuc_syn_C"/>
</dbReference>
<dbReference type="InterPro" id="IPR048267">
    <property type="entry name" value="Arginosuc_syn_N"/>
</dbReference>
<dbReference type="InterPro" id="IPR001518">
    <property type="entry name" value="Arginosuc_synth"/>
</dbReference>
<dbReference type="InterPro" id="IPR018223">
    <property type="entry name" value="Arginosuc_synth_CS"/>
</dbReference>
<dbReference type="InterPro" id="IPR023434">
    <property type="entry name" value="Arginosuc_synth_type_1_subfam"/>
</dbReference>
<dbReference type="InterPro" id="IPR024074">
    <property type="entry name" value="AS_cat/multimer_dom_body"/>
</dbReference>
<dbReference type="InterPro" id="IPR014729">
    <property type="entry name" value="Rossmann-like_a/b/a_fold"/>
</dbReference>
<dbReference type="NCBIfam" id="TIGR00032">
    <property type="entry name" value="argG"/>
    <property type="match status" value="1"/>
</dbReference>
<dbReference type="NCBIfam" id="NF001770">
    <property type="entry name" value="PRK00509.1"/>
    <property type="match status" value="1"/>
</dbReference>
<dbReference type="PANTHER" id="PTHR11587">
    <property type="entry name" value="ARGININOSUCCINATE SYNTHASE"/>
    <property type="match status" value="1"/>
</dbReference>
<dbReference type="PANTHER" id="PTHR11587:SF2">
    <property type="entry name" value="ARGININOSUCCINATE SYNTHASE"/>
    <property type="match status" value="1"/>
</dbReference>
<dbReference type="Pfam" id="PF20979">
    <property type="entry name" value="Arginosuc_syn_C"/>
    <property type="match status" value="1"/>
</dbReference>
<dbReference type="Pfam" id="PF00764">
    <property type="entry name" value="Arginosuc_synth"/>
    <property type="match status" value="1"/>
</dbReference>
<dbReference type="SUPFAM" id="SSF52402">
    <property type="entry name" value="Adenine nucleotide alpha hydrolases-like"/>
    <property type="match status" value="1"/>
</dbReference>
<dbReference type="SUPFAM" id="SSF69864">
    <property type="entry name" value="Argininosuccinate synthetase, C-terminal domain"/>
    <property type="match status" value="1"/>
</dbReference>
<dbReference type="PROSITE" id="PS00564">
    <property type="entry name" value="ARGININOSUCCIN_SYN_1"/>
    <property type="match status" value="1"/>
</dbReference>
<dbReference type="PROSITE" id="PS00565">
    <property type="entry name" value="ARGININOSUCCIN_SYN_2"/>
    <property type="match status" value="1"/>
</dbReference>
<reference key="1">
    <citation type="journal article" date="2001" name="Proc. Natl. Acad. Sci. U.S.A.">
        <title>Analysis of the chromosome sequence of the legume symbiont Sinorhizobium meliloti strain 1021.</title>
        <authorList>
            <person name="Capela D."/>
            <person name="Barloy-Hubler F."/>
            <person name="Gouzy J."/>
            <person name="Bothe G."/>
            <person name="Ampe F."/>
            <person name="Batut J."/>
            <person name="Boistard P."/>
            <person name="Becker A."/>
            <person name="Boutry M."/>
            <person name="Cadieu E."/>
            <person name="Dreano S."/>
            <person name="Gloux S."/>
            <person name="Godrie T."/>
            <person name="Goffeau A."/>
            <person name="Kahn D."/>
            <person name="Kiss E."/>
            <person name="Lelaure V."/>
            <person name="Masuy D."/>
            <person name="Pohl T."/>
            <person name="Portetelle D."/>
            <person name="Puehler A."/>
            <person name="Purnelle B."/>
            <person name="Ramsperger U."/>
            <person name="Renard C."/>
            <person name="Thebault P."/>
            <person name="Vandenbol M."/>
            <person name="Weidner S."/>
            <person name="Galibert F."/>
        </authorList>
    </citation>
    <scope>NUCLEOTIDE SEQUENCE [LARGE SCALE GENOMIC DNA]</scope>
    <source>
        <strain>1021</strain>
    </source>
</reference>
<reference key="2">
    <citation type="journal article" date="2001" name="Science">
        <title>The composite genome of the legume symbiont Sinorhizobium meliloti.</title>
        <authorList>
            <person name="Galibert F."/>
            <person name="Finan T.M."/>
            <person name="Long S.R."/>
            <person name="Puehler A."/>
            <person name="Abola P."/>
            <person name="Ampe F."/>
            <person name="Barloy-Hubler F."/>
            <person name="Barnett M.J."/>
            <person name="Becker A."/>
            <person name="Boistard P."/>
            <person name="Bothe G."/>
            <person name="Boutry M."/>
            <person name="Bowser L."/>
            <person name="Buhrmester J."/>
            <person name="Cadieu E."/>
            <person name="Capela D."/>
            <person name="Chain P."/>
            <person name="Cowie A."/>
            <person name="Davis R.W."/>
            <person name="Dreano S."/>
            <person name="Federspiel N.A."/>
            <person name="Fisher R.F."/>
            <person name="Gloux S."/>
            <person name="Godrie T."/>
            <person name="Goffeau A."/>
            <person name="Golding B."/>
            <person name="Gouzy J."/>
            <person name="Gurjal M."/>
            <person name="Hernandez-Lucas I."/>
            <person name="Hong A."/>
            <person name="Huizar L."/>
            <person name="Hyman R.W."/>
            <person name="Jones T."/>
            <person name="Kahn D."/>
            <person name="Kahn M.L."/>
            <person name="Kalman S."/>
            <person name="Keating D.H."/>
            <person name="Kiss E."/>
            <person name="Komp C."/>
            <person name="Lelaure V."/>
            <person name="Masuy D."/>
            <person name="Palm C."/>
            <person name="Peck M.C."/>
            <person name="Pohl T.M."/>
            <person name="Portetelle D."/>
            <person name="Purnelle B."/>
            <person name="Ramsperger U."/>
            <person name="Surzycki R."/>
            <person name="Thebault P."/>
            <person name="Vandenbol M."/>
            <person name="Vorhoelter F.J."/>
            <person name="Weidner S."/>
            <person name="Wells D.H."/>
            <person name="Wong K."/>
            <person name="Yeh K.-C."/>
            <person name="Batut J."/>
        </authorList>
    </citation>
    <scope>NUCLEOTIDE SEQUENCE [LARGE SCALE GENOMIC DNA]</scope>
    <source>
        <strain>1021</strain>
    </source>
</reference>
<protein>
    <recommendedName>
        <fullName evidence="1">Argininosuccinate synthase</fullName>
        <ecNumber evidence="1">6.3.4.5</ecNumber>
    </recommendedName>
    <alternativeName>
        <fullName evidence="1">Citrulline--aspartate ligase</fullName>
    </alternativeName>
</protein>
<sequence length="405" mass="45031">MASHKDVKKVVLAYSGGLDTSIILKWLQTELGAEVVTFTADLGQGEELEPARKKAEMLGIKEIYIEDVREEFVRDFVFPMFRANAVYEGVYLLGTSIARPLISKHLIDIARKTGADAIAHGATGKGNDQVRFELSAYALNPDIKIIAPWRDWSFKSRTDLLEFAEKHQIPVAKDKKGEAPFSVDANLLHSSSEGKVLEDPAREAPEYVHMRTISPEAAPDKATVIKVGFERGDAVSIDGVRMSPATLLAKLNEYGRDNGIGRLDLVENRFVGMKSRGVYETPGGTILLAAHRAIESITLDRGAAHLKDELMPRYAELIYYGFWFSPEREMLQAAIDRSQEHVEGEVTLKLYKGNVMVIGRESGKSLYSDKLVTFEDDQGAYDQKDAAGFIKLNALRLRTLAARNR</sequence>
<accession>Q92L73</accession>
<feature type="chain" id="PRO_0000148630" description="Argininosuccinate synthase">
    <location>
        <begin position="1"/>
        <end position="405"/>
    </location>
</feature>
<feature type="binding site" evidence="1">
    <location>
        <begin position="13"/>
        <end position="21"/>
    </location>
    <ligand>
        <name>ATP</name>
        <dbReference type="ChEBI" id="CHEBI:30616"/>
    </ligand>
</feature>
<feature type="binding site" evidence="1">
    <location>
        <position position="40"/>
    </location>
    <ligand>
        <name>ATP</name>
        <dbReference type="ChEBI" id="CHEBI:30616"/>
    </ligand>
</feature>
<feature type="binding site" evidence="1">
    <location>
        <position position="91"/>
    </location>
    <ligand>
        <name>L-citrulline</name>
        <dbReference type="ChEBI" id="CHEBI:57743"/>
    </ligand>
</feature>
<feature type="binding site" evidence="1">
    <location>
        <position position="96"/>
    </location>
    <ligand>
        <name>L-citrulline</name>
        <dbReference type="ChEBI" id="CHEBI:57743"/>
    </ligand>
</feature>
<feature type="binding site" evidence="1">
    <location>
        <position position="121"/>
    </location>
    <ligand>
        <name>ATP</name>
        <dbReference type="ChEBI" id="CHEBI:30616"/>
    </ligand>
</feature>
<feature type="binding site" evidence="1">
    <location>
        <position position="123"/>
    </location>
    <ligand>
        <name>L-aspartate</name>
        <dbReference type="ChEBI" id="CHEBI:29991"/>
    </ligand>
</feature>
<feature type="binding site" evidence="1">
    <location>
        <position position="127"/>
    </location>
    <ligand>
        <name>L-aspartate</name>
        <dbReference type="ChEBI" id="CHEBI:29991"/>
    </ligand>
</feature>
<feature type="binding site" evidence="1">
    <location>
        <position position="127"/>
    </location>
    <ligand>
        <name>L-citrulline</name>
        <dbReference type="ChEBI" id="CHEBI:57743"/>
    </ligand>
</feature>
<feature type="binding site" evidence="1">
    <location>
        <position position="128"/>
    </location>
    <ligand>
        <name>L-aspartate</name>
        <dbReference type="ChEBI" id="CHEBI:29991"/>
    </ligand>
</feature>
<feature type="binding site" evidence="1">
    <location>
        <position position="131"/>
    </location>
    <ligand>
        <name>L-citrulline</name>
        <dbReference type="ChEBI" id="CHEBI:57743"/>
    </ligand>
</feature>
<feature type="binding site" evidence="1">
    <location>
        <position position="182"/>
    </location>
    <ligand>
        <name>L-citrulline</name>
        <dbReference type="ChEBI" id="CHEBI:57743"/>
    </ligand>
</feature>
<feature type="binding site" evidence="1">
    <location>
        <position position="191"/>
    </location>
    <ligand>
        <name>L-citrulline</name>
        <dbReference type="ChEBI" id="CHEBI:57743"/>
    </ligand>
</feature>
<feature type="binding site" evidence="1">
    <location>
        <position position="267"/>
    </location>
    <ligand>
        <name>L-citrulline</name>
        <dbReference type="ChEBI" id="CHEBI:57743"/>
    </ligand>
</feature>
<feature type="binding site" evidence="1">
    <location>
        <position position="279"/>
    </location>
    <ligand>
        <name>L-citrulline</name>
        <dbReference type="ChEBI" id="CHEBI:57743"/>
    </ligand>
</feature>
<keyword id="KW-0028">Amino-acid biosynthesis</keyword>
<keyword id="KW-0055">Arginine biosynthesis</keyword>
<keyword id="KW-0067">ATP-binding</keyword>
<keyword id="KW-0963">Cytoplasm</keyword>
<keyword id="KW-0436">Ligase</keyword>
<keyword id="KW-0547">Nucleotide-binding</keyword>
<keyword id="KW-1185">Reference proteome</keyword>